<organism>
    <name type="scientific">Gallus gallus</name>
    <name type="common">Chicken</name>
    <dbReference type="NCBI Taxonomy" id="9031"/>
    <lineage>
        <taxon>Eukaryota</taxon>
        <taxon>Metazoa</taxon>
        <taxon>Chordata</taxon>
        <taxon>Craniata</taxon>
        <taxon>Vertebrata</taxon>
        <taxon>Euteleostomi</taxon>
        <taxon>Archelosauria</taxon>
        <taxon>Archosauria</taxon>
        <taxon>Dinosauria</taxon>
        <taxon>Saurischia</taxon>
        <taxon>Theropoda</taxon>
        <taxon>Coelurosauria</taxon>
        <taxon>Aves</taxon>
        <taxon>Neognathae</taxon>
        <taxon>Galloanserae</taxon>
        <taxon>Galliformes</taxon>
        <taxon>Phasianidae</taxon>
        <taxon>Phasianinae</taxon>
        <taxon>Gallus</taxon>
    </lineage>
</organism>
<comment type="function">
    <text evidence="2">Proton-activated proton channel that catalyzes proton efflux from endosomes and lysosomes to maintain a steady-state pH. Activated at low pH (under pH 4.6) by luminal side protons: selectively mediates lysosomal proton release from lysosomes, eliciting a proton leak that balances V-ATPase activity to maintain pH homeostasis. Regulation of lumenal pH stability is required for autophagosome-lysosome fusion. Also acts as a potassium channel at higher pH, regulating potassium conductance in endosomes and lysosomes.</text>
</comment>
<comment type="catalytic activity">
    <reaction evidence="2">
        <text>H(+)(in) = H(+)(out)</text>
        <dbReference type="Rhea" id="RHEA:34979"/>
        <dbReference type="ChEBI" id="CHEBI:15378"/>
    </reaction>
</comment>
<comment type="catalytic activity">
    <reaction evidence="2">
        <text>K(+)(in) = K(+)(out)</text>
        <dbReference type="Rhea" id="RHEA:29463"/>
        <dbReference type="ChEBI" id="CHEBI:29103"/>
    </reaction>
</comment>
<comment type="activity regulation">
    <text evidence="2">Active at low pH (under pH 4.6): proton channel activity is activated by luminal side protons. Polyunsaturated fatty acids, such as arachidonic acid, also activate the channel activity.</text>
</comment>
<comment type="subunit">
    <text evidence="2">Homodimer.</text>
</comment>
<comment type="subcellular location">
    <subcellularLocation>
        <location evidence="2">Endosome membrane</location>
        <topology evidence="3">Multi-pass membrane protein</topology>
    </subcellularLocation>
    <subcellularLocation>
        <location evidence="2">Lysosome membrane</location>
        <topology evidence="3">Multi-pass membrane protein</topology>
    </subcellularLocation>
</comment>
<comment type="domain">
    <text evidence="2">Composed of two modules of six transmembranes, forming a homodimer with a tetrameric architecture. The six transmembrane regions of each module are tightly packed within each subunit without undergoing domain swapping. Forms a central ion-conduction pore lined by the side chains of the pore-lining helices. Conserved isoleucine residues (Ile-44 in the first module and Ile-271 in the second module) in the center of the pore serve as the gate in the closed conformation. In the widened channel in the open conformation, the same residues establish a constriction essential for potassium selectivity.</text>
</comment>
<comment type="similarity">
    <text evidence="6">Belongs to the TMEM175 family.</text>
</comment>
<reference key="1">
    <citation type="journal article" date="2005" name="Genome Biol.">
        <title>Full-length cDNAs from chicken bursal lymphocytes to facilitate gene function analysis.</title>
        <authorList>
            <person name="Caldwell R.B."/>
            <person name="Kierzek A.M."/>
            <person name="Arakawa H."/>
            <person name="Bezzubov Y."/>
            <person name="Zaim J."/>
            <person name="Fiedler P."/>
            <person name="Kutter S."/>
            <person name="Blagodatski A."/>
            <person name="Kostovska D."/>
            <person name="Koter M."/>
            <person name="Plachy J."/>
            <person name="Carninci P."/>
            <person name="Hayashizaki Y."/>
            <person name="Buerstedde J.-M."/>
        </authorList>
    </citation>
    <scope>NUCLEOTIDE SEQUENCE [LARGE SCALE MRNA]</scope>
    <source>
        <strain>CB</strain>
        <tissue>Bursa of Fabricius</tissue>
    </source>
</reference>
<reference key="2">
    <citation type="journal article" date="2004" name="Nature">
        <title>Sequence and comparative analysis of the chicken genome provide unique perspectives on vertebrate evolution.</title>
        <authorList>
            <person name="Hillier L.W."/>
            <person name="Miller W."/>
            <person name="Birney E."/>
            <person name="Warren W."/>
            <person name="Hardison R.C."/>
            <person name="Ponting C.P."/>
            <person name="Bork P."/>
            <person name="Burt D.W."/>
            <person name="Groenen M.A.M."/>
            <person name="Delany M.E."/>
            <person name="Dodgson J.B."/>
            <person name="Chinwalla A.T."/>
            <person name="Cliften P.F."/>
            <person name="Clifton S.W."/>
            <person name="Delehaunty K.D."/>
            <person name="Fronick C."/>
            <person name="Fulton R.S."/>
            <person name="Graves T.A."/>
            <person name="Kremitzki C."/>
            <person name="Layman D."/>
            <person name="Magrini V."/>
            <person name="McPherson J.D."/>
            <person name="Miner T.L."/>
            <person name="Minx P."/>
            <person name="Nash W.E."/>
            <person name="Nhan M.N."/>
            <person name="Nelson J.O."/>
            <person name="Oddy L.G."/>
            <person name="Pohl C.S."/>
            <person name="Randall-Maher J."/>
            <person name="Smith S.M."/>
            <person name="Wallis J.W."/>
            <person name="Yang S.-P."/>
            <person name="Romanov M.N."/>
            <person name="Rondelli C.M."/>
            <person name="Paton B."/>
            <person name="Smith J."/>
            <person name="Morrice D."/>
            <person name="Daniels L."/>
            <person name="Tempest H.G."/>
            <person name="Robertson L."/>
            <person name="Masabanda J.S."/>
            <person name="Griffin D.K."/>
            <person name="Vignal A."/>
            <person name="Fillon V."/>
            <person name="Jacobbson L."/>
            <person name="Kerje S."/>
            <person name="Andersson L."/>
            <person name="Crooijmans R.P."/>
            <person name="Aerts J."/>
            <person name="van der Poel J.J."/>
            <person name="Ellegren H."/>
            <person name="Caldwell R.B."/>
            <person name="Hubbard S.J."/>
            <person name="Grafham D.V."/>
            <person name="Kierzek A.M."/>
            <person name="McLaren S.R."/>
            <person name="Overton I.M."/>
            <person name="Arakawa H."/>
            <person name="Beattie K.J."/>
            <person name="Bezzubov Y."/>
            <person name="Boardman P.E."/>
            <person name="Bonfield J.K."/>
            <person name="Croning M.D.R."/>
            <person name="Davies R.M."/>
            <person name="Francis M.D."/>
            <person name="Humphray S.J."/>
            <person name="Scott C.E."/>
            <person name="Taylor R.G."/>
            <person name="Tickle C."/>
            <person name="Brown W.R.A."/>
            <person name="Rogers J."/>
            <person name="Buerstedde J.-M."/>
            <person name="Wilson S.A."/>
            <person name="Stubbs L."/>
            <person name="Ovcharenko I."/>
            <person name="Gordon L."/>
            <person name="Lucas S."/>
            <person name="Miller M.M."/>
            <person name="Inoko H."/>
            <person name="Shiina T."/>
            <person name="Kaufman J."/>
            <person name="Salomonsen J."/>
            <person name="Skjoedt K."/>
            <person name="Wong G.K.-S."/>
            <person name="Wang J."/>
            <person name="Liu B."/>
            <person name="Wang J."/>
            <person name="Yu J."/>
            <person name="Yang H."/>
            <person name="Nefedov M."/>
            <person name="Koriabine M."/>
            <person name="Dejong P.J."/>
            <person name="Goodstadt L."/>
            <person name="Webber C."/>
            <person name="Dickens N.J."/>
            <person name="Letunic I."/>
            <person name="Suyama M."/>
            <person name="Torrents D."/>
            <person name="von Mering C."/>
            <person name="Zdobnov E.M."/>
            <person name="Makova K."/>
            <person name="Nekrutenko A."/>
            <person name="Elnitski L."/>
            <person name="Eswara P."/>
            <person name="King D.C."/>
            <person name="Yang S.-P."/>
            <person name="Tyekucheva S."/>
            <person name="Radakrishnan A."/>
            <person name="Harris R.S."/>
            <person name="Chiaromonte F."/>
            <person name="Taylor J."/>
            <person name="He J."/>
            <person name="Rijnkels M."/>
            <person name="Griffiths-Jones S."/>
            <person name="Ureta-Vidal A."/>
            <person name="Hoffman M.M."/>
            <person name="Severin J."/>
            <person name="Searle S.M.J."/>
            <person name="Law A.S."/>
            <person name="Speed D."/>
            <person name="Waddington D."/>
            <person name="Cheng Z."/>
            <person name="Tuzun E."/>
            <person name="Eichler E."/>
            <person name="Bao Z."/>
            <person name="Flicek P."/>
            <person name="Shteynberg D.D."/>
            <person name="Brent M.R."/>
            <person name="Bye J.M."/>
            <person name="Huckle E.J."/>
            <person name="Chatterji S."/>
            <person name="Dewey C."/>
            <person name="Pachter L."/>
            <person name="Kouranov A."/>
            <person name="Mourelatos Z."/>
            <person name="Hatzigeorgiou A.G."/>
            <person name="Paterson A.H."/>
            <person name="Ivarie R."/>
            <person name="Brandstrom M."/>
            <person name="Axelsson E."/>
            <person name="Backstrom N."/>
            <person name="Berlin S."/>
            <person name="Webster M.T."/>
            <person name="Pourquie O."/>
            <person name="Reymond A."/>
            <person name="Ucla C."/>
            <person name="Antonarakis S.E."/>
            <person name="Long M."/>
            <person name="Emerson J.J."/>
            <person name="Betran E."/>
            <person name="Dupanloup I."/>
            <person name="Kaessmann H."/>
            <person name="Hinrichs A.S."/>
            <person name="Bejerano G."/>
            <person name="Furey T.S."/>
            <person name="Harte R.A."/>
            <person name="Raney B."/>
            <person name="Siepel A."/>
            <person name="Kent W.J."/>
            <person name="Haussler D."/>
            <person name="Eyras E."/>
            <person name="Castelo R."/>
            <person name="Abril J.F."/>
            <person name="Castellano S."/>
            <person name="Camara F."/>
            <person name="Parra G."/>
            <person name="Guigo R."/>
            <person name="Bourque G."/>
            <person name="Tesler G."/>
            <person name="Pevzner P.A."/>
            <person name="Smit A."/>
            <person name="Fulton L.A."/>
            <person name="Mardis E.R."/>
            <person name="Wilson R.K."/>
        </authorList>
    </citation>
    <scope>NUCLEOTIDE SEQUENCE [LARGE SCALE GENOMIC DNA]</scope>
    <source>
        <strain>Red jungle fowl</strain>
    </source>
</reference>
<protein>
    <recommendedName>
        <fullName evidence="6">Endosomal/lysosomal proton channel TMEM175</fullName>
    </recommendedName>
    <alternativeName>
        <fullName evidence="6">Potassium channel TMEM175</fullName>
    </alternativeName>
    <alternativeName>
        <fullName evidence="2">Transmembrane protein 175</fullName>
    </alternativeName>
</protein>
<sequence length="501" mass="56098">MAAPRAATPGPGGGARKPELDLELGSSTQTSHRLLAYSDALLSIIATVMILPVAHTKIHPDQKLGESVQQLLLTKIAVYLMTFLIVTVAWAAHVRLFQVIELIDDVLALLNLACMMIITFLPYTFSLMASFPGVPFGIFLFSVCAVVIGLIQAVIVVYGFYHPHLLNQQIQVSENQNFYKRHILKIILRGPALCFLAAIFSFFFIPLSYLLLGLVIVFPHLSRFITWCKTKIVGHRDEEEASYSLETFSFYLSEPLSKERVEAFSDGVYAIVATLLILDICEDNVPDPREVGEKFHGSLLEALSEYGPNYLAYFGSFVTIGLLWFVHHSLFLYVTKATRLMGLLNILSLAFIGGLPLAYQLTSEFAEKSHNEIEAIQVSCVITFFASIFQFAIWTTALLHERETLHPFARYGGKEHAFMFAKLALYPCVSLGAFFLTCLLSEFSTEIFHLMQIVIPFAFLALRIFVRISLTVIKSVMSLSRRKVVLLEEEEACLSPTETHS</sequence>
<feature type="chain" id="PRO_0000282591" description="Endosomal/lysosomal proton channel TMEM175">
    <location>
        <begin position="1"/>
        <end position="501"/>
    </location>
</feature>
<feature type="topological domain" description="Cytoplasmic" evidence="2">
    <location>
        <begin position="1"/>
        <end position="31"/>
    </location>
</feature>
<feature type="transmembrane region" description="Helical; Name=TM1-1" evidence="2">
    <location>
        <begin position="32"/>
        <end position="54"/>
    </location>
</feature>
<feature type="topological domain" description="Lumenal" evidence="2">
    <location>
        <begin position="55"/>
        <end position="75"/>
    </location>
</feature>
<feature type="transmembrane region" description="Helical; Name=TM2-1" evidence="2">
    <location>
        <begin position="76"/>
        <end position="98"/>
    </location>
</feature>
<feature type="topological domain" description="Cytoplasmic" evidence="2">
    <location>
        <begin position="99"/>
        <end position="104"/>
    </location>
</feature>
<feature type="transmembrane region" description="Helical; Name=TM3-1" evidence="2">
    <location>
        <begin position="105"/>
        <end position="126"/>
    </location>
</feature>
<feature type="topological domain" description="Lumenal" evidence="2">
    <location>
        <begin position="127"/>
        <end position="136"/>
    </location>
</feature>
<feature type="transmembrane region" description="Helical; Name=TM4-1" evidence="2">
    <location>
        <begin position="137"/>
        <end position="158"/>
    </location>
</feature>
<feature type="topological domain" description="Cytoplasmic" evidence="2">
    <location>
        <begin position="159"/>
        <end position="182"/>
    </location>
</feature>
<feature type="transmembrane region" description="Helical; Name=TM5-1" evidence="3">
    <location>
        <begin position="183"/>
        <end position="203"/>
    </location>
</feature>
<feature type="topological domain" description="Lumenal" evidence="2">
    <location>
        <begin position="204"/>
        <end position="208"/>
    </location>
</feature>
<feature type="transmembrane region" description="Helical; Name=TM6-1" evidence="3">
    <location>
        <begin position="209"/>
        <end position="228"/>
    </location>
</feature>
<feature type="topological domain" description="Cytoplasmic" evidence="2">
    <location>
        <begin position="229"/>
        <end position="257"/>
    </location>
</feature>
<feature type="transmembrane region" description="Helical; Name=TM1-2" evidence="2">
    <location>
        <begin position="258"/>
        <end position="282"/>
    </location>
</feature>
<feature type="topological domain" description="Lumenal" evidence="2">
    <location>
        <begin position="283"/>
        <end position="309"/>
    </location>
</feature>
<feature type="transmembrane region" description="Helical; Name=TM2-2" evidence="2">
    <location>
        <begin position="310"/>
        <end position="332"/>
    </location>
</feature>
<feature type="topological domain" description="Cytoplasmic" evidence="2">
    <location>
        <begin position="333"/>
        <end position="338"/>
    </location>
</feature>
<feature type="transmembrane region" description="Helical; Name=TM3-2" evidence="2">
    <location>
        <begin position="339"/>
        <end position="360"/>
    </location>
</feature>
<feature type="topological domain" description="Lumenal" evidence="2">
    <location>
        <begin position="361"/>
        <end position="375"/>
    </location>
</feature>
<feature type="transmembrane region" description="Helical; Name=TM4-2" evidence="2">
    <location>
        <begin position="376"/>
        <end position="396"/>
    </location>
</feature>
<feature type="topological domain" description="Cytoplasmic" evidence="2">
    <location>
        <begin position="397"/>
        <end position="416"/>
    </location>
</feature>
<feature type="transmembrane region" description="Helical; Name=TM5-2" evidence="2">
    <location>
        <begin position="417"/>
        <end position="440"/>
    </location>
</feature>
<feature type="topological domain" description="Lumenal" evidence="2">
    <location>
        <begin position="441"/>
        <end position="442"/>
    </location>
</feature>
<feature type="transmembrane region" description="Helical; Name=TM6-2" evidence="2">
    <location>
        <begin position="443"/>
        <end position="469"/>
    </location>
</feature>
<feature type="topological domain" description="Cytoplasmic" evidence="2">
    <location>
        <begin position="470"/>
        <end position="501"/>
    </location>
</feature>
<feature type="region of interest" description="Disordered" evidence="4">
    <location>
        <begin position="1"/>
        <end position="20"/>
    </location>
</feature>
<feature type="region of interest" description="Short helix H1-1" evidence="1">
    <location>
        <begin position="56"/>
        <end position="61"/>
    </location>
</feature>
<feature type="region of interest" description="Short helix H2-1" evidence="1">
    <location>
        <begin position="63"/>
        <end position="69"/>
    </location>
</feature>
<feature type="region of interest" description="Short helix H1-2" evidence="1">
    <location>
        <begin position="288"/>
        <end position="296"/>
    </location>
</feature>
<feature type="region of interest" description="Short helix H2-2" evidence="1">
    <location>
        <begin position="298"/>
        <end position="304"/>
    </location>
</feature>
<feature type="short sequence motif" description="RxxxFSD motif 1" evidence="2">
    <location>
        <begin position="33"/>
        <end position="39"/>
    </location>
</feature>
<feature type="short sequence motif" description="RxxxFSD motif 2" evidence="2">
    <location>
        <begin position="260"/>
        <end position="266"/>
    </location>
</feature>
<feature type="site" description="Hydrophobic filter residue 1-1" evidence="2">
    <location>
        <position position="44"/>
    </location>
</feature>
<feature type="site" description="Hydrophobic filter residue 2-1" evidence="1">
    <location>
        <position position="48"/>
    </location>
</feature>
<feature type="site" description="Hydrophobic filter residue 3-1" evidence="1">
    <location>
        <position position="51"/>
    </location>
</feature>
<feature type="site" description="Hydrophobic filter residue 1-2" evidence="2">
    <location>
        <position position="271"/>
    </location>
</feature>
<feature type="site" description="Hydrophobic filter residue 2-2" evidence="1">
    <location>
        <position position="275"/>
    </location>
</feature>
<feature type="site" description="Hydrophobic filter residue 3-2" evidence="1">
    <location>
        <position position="278"/>
    </location>
</feature>
<feature type="sequence conflict" description="In Ref. 1; CAG31613." ref="1">
    <original>V</original>
    <variation>I</variation>
    <location>
        <position position="68"/>
    </location>
</feature>
<accession>Q5ZKY0</accession>
<accession>F1NKK7</accession>
<keyword id="KW-0967">Endosome</keyword>
<keyword id="KW-0407">Ion channel</keyword>
<keyword id="KW-0406">Ion transport</keyword>
<keyword id="KW-0458">Lysosome</keyword>
<keyword id="KW-0472">Membrane</keyword>
<keyword id="KW-0630">Potassium</keyword>
<keyword id="KW-0631">Potassium channel</keyword>
<keyword id="KW-0633">Potassium transport</keyword>
<keyword id="KW-1185">Reference proteome</keyword>
<keyword id="KW-0812">Transmembrane</keyword>
<keyword id="KW-1133">Transmembrane helix</keyword>
<keyword id="KW-0813">Transport</keyword>
<gene>
    <name evidence="2" type="primary">TMEM175</name>
    <name evidence="5" type="ORF">RCJMB04_8l18</name>
</gene>
<evidence type="ECO:0000250" key="1">
    <source>
        <dbReference type="UniProtKB" id="K9UJK2"/>
    </source>
</evidence>
<evidence type="ECO:0000250" key="2">
    <source>
        <dbReference type="UniProtKB" id="Q9BSA9"/>
    </source>
</evidence>
<evidence type="ECO:0000255" key="3"/>
<evidence type="ECO:0000256" key="4">
    <source>
        <dbReference type="SAM" id="MobiDB-lite"/>
    </source>
</evidence>
<evidence type="ECO:0000303" key="5">
    <source>
    </source>
</evidence>
<evidence type="ECO:0000305" key="6"/>
<dbReference type="EMBL" id="AJ719954">
    <property type="protein sequence ID" value="CAG31613.1"/>
    <property type="molecule type" value="mRNA"/>
</dbReference>
<dbReference type="EMBL" id="AC189115">
    <property type="status" value="NOT_ANNOTATED_CDS"/>
    <property type="molecule type" value="Genomic_DNA"/>
</dbReference>
<dbReference type="RefSeq" id="NP_001006582.2">
    <property type="nucleotide sequence ID" value="NM_001006582.2"/>
</dbReference>
<dbReference type="SMR" id="Q5ZKY0"/>
<dbReference type="FunCoup" id="Q5ZKY0">
    <property type="interactions" value="859"/>
</dbReference>
<dbReference type="STRING" id="9031.ENSGALP00000024753"/>
<dbReference type="GlyGen" id="Q5ZKY0">
    <property type="glycosylation" value="1 site"/>
</dbReference>
<dbReference type="PaxDb" id="9031-ENSGALP00000024753"/>
<dbReference type="GeneID" id="427293"/>
<dbReference type="KEGG" id="gga:427293"/>
<dbReference type="CTD" id="84286"/>
<dbReference type="VEuPathDB" id="HostDB:geneid_427293"/>
<dbReference type="eggNOG" id="ENOG502QR5C">
    <property type="taxonomic scope" value="Eukaryota"/>
</dbReference>
<dbReference type="InParanoid" id="Q5ZKY0"/>
<dbReference type="OMA" id="FFFPVSY"/>
<dbReference type="OrthoDB" id="203835at2759"/>
<dbReference type="PhylomeDB" id="Q5ZKY0"/>
<dbReference type="TreeFam" id="TF328838"/>
<dbReference type="PRO" id="PR:Q5ZKY0"/>
<dbReference type="Proteomes" id="UP000000539">
    <property type="component" value="Chromosome Z"/>
</dbReference>
<dbReference type="Bgee" id="ENSGALG00000015368">
    <property type="expression patterns" value="Expressed in brain and 13 other cell types or tissues"/>
</dbReference>
<dbReference type="GO" id="GO:0005768">
    <property type="term" value="C:endosome"/>
    <property type="evidence" value="ECO:0000250"/>
    <property type="project" value="UniProtKB"/>
</dbReference>
<dbReference type="GO" id="GO:0010008">
    <property type="term" value="C:endosome membrane"/>
    <property type="evidence" value="ECO:0000250"/>
    <property type="project" value="UniProtKB"/>
</dbReference>
<dbReference type="GO" id="GO:0005765">
    <property type="term" value="C:lysosomal membrane"/>
    <property type="evidence" value="ECO:0000250"/>
    <property type="project" value="UniProtKB"/>
</dbReference>
<dbReference type="GO" id="GO:0005764">
    <property type="term" value="C:lysosome"/>
    <property type="evidence" value="ECO:0000250"/>
    <property type="project" value="UniProtKB"/>
</dbReference>
<dbReference type="GO" id="GO:0050544">
    <property type="term" value="F:arachidonate binding"/>
    <property type="evidence" value="ECO:0000250"/>
    <property type="project" value="UniProtKB"/>
</dbReference>
<dbReference type="GO" id="GO:0005267">
    <property type="term" value="F:potassium channel activity"/>
    <property type="evidence" value="ECO:0000250"/>
    <property type="project" value="UniProtKB"/>
</dbReference>
<dbReference type="GO" id="GO:0022841">
    <property type="term" value="F:potassium ion leak channel activity"/>
    <property type="evidence" value="ECO:0000250"/>
    <property type="project" value="UniProtKB"/>
</dbReference>
<dbReference type="GO" id="GO:0015252">
    <property type="term" value="F:proton channel activity"/>
    <property type="evidence" value="ECO:0000250"/>
    <property type="project" value="UniProtKB"/>
</dbReference>
<dbReference type="GO" id="GO:0035752">
    <property type="term" value="P:lysosomal lumen pH elevation"/>
    <property type="evidence" value="ECO:0000250"/>
    <property type="project" value="UniProtKB"/>
</dbReference>
<dbReference type="GO" id="GO:0070050">
    <property type="term" value="P:neuron cellular homeostasis"/>
    <property type="evidence" value="ECO:0000250"/>
    <property type="project" value="UniProtKB"/>
</dbReference>
<dbReference type="GO" id="GO:0090385">
    <property type="term" value="P:phagosome-lysosome fusion"/>
    <property type="evidence" value="ECO:0000250"/>
    <property type="project" value="UniProtKB"/>
</dbReference>
<dbReference type="GO" id="GO:0071805">
    <property type="term" value="P:potassium ion transmembrane transport"/>
    <property type="evidence" value="ECO:0000250"/>
    <property type="project" value="UniProtKB"/>
</dbReference>
<dbReference type="GO" id="GO:1902600">
    <property type="term" value="P:proton transmembrane transport"/>
    <property type="evidence" value="ECO:0000250"/>
    <property type="project" value="UniProtKB"/>
</dbReference>
<dbReference type="GO" id="GO:0035751">
    <property type="term" value="P:regulation of lysosomal lumen pH"/>
    <property type="evidence" value="ECO:0000250"/>
    <property type="project" value="UniProtKB"/>
</dbReference>
<dbReference type="InterPro" id="IPR010617">
    <property type="entry name" value="TMEM175-like"/>
</dbReference>
<dbReference type="PANTHER" id="PTHR31462">
    <property type="entry name" value="ENDOSOMAL/LYSOSOMAL POTASSIUM CHANNEL TMEM175"/>
    <property type="match status" value="1"/>
</dbReference>
<dbReference type="PANTHER" id="PTHR31462:SF5">
    <property type="entry name" value="ENDOSOMAL_LYSOSOMAL PROTON CHANNEL TMEM175"/>
    <property type="match status" value="1"/>
</dbReference>
<dbReference type="Pfam" id="PF06736">
    <property type="entry name" value="TMEM175"/>
    <property type="match status" value="2"/>
</dbReference>
<name>TM175_CHICK</name>
<proteinExistence type="evidence at transcript level"/>